<accession>P05860</accession>
<gene>
    <name type="primary">nef</name>
</gene>
<reference key="1">
    <citation type="journal article" date="1988" name="Proc. Natl. Acad. Sci. U.S.A.">
        <title>Genetic variability between isolates of human immunodeficiency virus (HIV) type 2 is comparable to the variability among HIV type 1.</title>
        <authorList>
            <person name="Zagury J.F."/>
            <person name="Franchini G."/>
            <person name="Reitz M.S. Jr."/>
            <person name="Collalti E."/>
            <person name="Starcich B.R."/>
            <person name="Hall L."/>
            <person name="Fargnoli K.A."/>
            <person name="Jagodzinski L.L."/>
            <person name="Guo H.-G."/>
            <person name="Laure F."/>
            <person name="Arya S.K."/>
            <person name="Josephs S.F."/>
            <person name="Zagury D."/>
            <person name="Wong-Staal F."/>
            <person name="Gallo R.C."/>
        </authorList>
    </citation>
    <scope>NUCLEOTIDE SEQUENCE [GENOMIC DNA]</scope>
</reference>
<name>NEF_HV2NZ</name>
<protein>
    <recommendedName>
        <fullName>Protein Nef</fullName>
    </recommendedName>
    <alternativeName>
        <fullName>3'ORF</fullName>
    </alternativeName>
    <alternativeName>
        <fullName>Negative factor</fullName>
        <shortName>F-protein</shortName>
    </alternativeName>
</protein>
<proteinExistence type="inferred from homology"/>
<organism>
    <name type="scientific">Human immunodeficiency virus type 2 subtype A (isolate NIH-Z)</name>
    <name type="common">HIV-2</name>
    <dbReference type="NCBI Taxonomy" id="11719"/>
    <lineage>
        <taxon>Viruses</taxon>
        <taxon>Riboviria</taxon>
        <taxon>Pararnavirae</taxon>
        <taxon>Artverviricota</taxon>
        <taxon>Revtraviricetes</taxon>
        <taxon>Ortervirales</taxon>
        <taxon>Retroviridae</taxon>
        <taxon>Orthoretrovirinae</taxon>
        <taxon>Lentivirus</taxon>
        <taxon>Human immunodeficiency virus 2</taxon>
    </lineage>
</organism>
<comment type="function">
    <text evidence="1">Factor of infectivity and pathogenicity, required for optimal virus replication. Alters numerous pathways of T-lymphocyte function and down-regulates immunity surface molecules in order to evade host defense and increase viral infectivity. Alters the functionality of other immunity cells, like dendritic cells, monocytes/macrophages and NK cells. One of the earliest and most abundantly expressed viral proteins (By similarity).</text>
</comment>
<comment type="function">
    <text evidence="1">In infected CD4(+) T-lymphocytes, down-regulates cell surface expression of CD4, CD28, CD3, and MHC-I or MHC-II molecules.</text>
</comment>
<comment type="function">
    <text evidence="1">Interferes with TCR signaling from the cell membrane. Interacts with CD247/TCRZ (TCR zeta chain) and exert potent down-regulation of cell surface TCR/CD3 complexes (By similarity).</text>
</comment>
<comment type="function">
    <text evidence="1">Plays a role in optimizing the host cell environment for viral replication without causing cell death by apoptosis. Protects the infected cells from apoptosis in order to keep them alive until the next virus generation is ready to strike (By similarity).</text>
</comment>
<comment type="function">
    <text evidence="1">Extracellular Nef protein targets CD4(+) T-lymphocytes for apoptosis by interacting with CXCR4 surface receptors.</text>
</comment>
<comment type="subunit">
    <text evidence="1">Homodimer. Interacts with host CD247/TCRZ; this interaction induces down-regulation of cell surface TCR/CD3 complexes.</text>
</comment>
<comment type="subcellular location">
    <subcellularLocation>
        <location evidence="1">Host cell membrane</location>
        <topology evidence="1">Lipid-anchor</topology>
        <orientation evidence="1">Cytoplasmic side</orientation>
    </subcellularLocation>
    <text evidence="1">Associates with the inner plasma membrane through its N-terminal domain.</text>
</comment>
<comment type="domain">
    <text evidence="1">The N-terminal domain is composed of the N-myristoyl glycine and of a cluster of positively charged amino acids. It is required for inner plasma membrane targeting of Nef and virion incorporation, and thereby for infectivity (By similarity).</text>
</comment>
<comment type="similarity">
    <text evidence="3">Belongs to the lentivirus primate group Nef protein family.</text>
</comment>
<dbReference type="EMBL" id="J03654">
    <property type="protein sequence ID" value="AAB00762.1"/>
    <property type="molecule type" value="Genomic_DNA"/>
</dbReference>
<dbReference type="SMR" id="P05860"/>
<dbReference type="Proteomes" id="UP000246679">
    <property type="component" value="Segment"/>
</dbReference>
<dbReference type="GO" id="GO:0020002">
    <property type="term" value="C:host cell plasma membrane"/>
    <property type="evidence" value="ECO:0007669"/>
    <property type="project" value="UniProtKB-SubCell"/>
</dbReference>
<dbReference type="GO" id="GO:0016020">
    <property type="term" value="C:membrane"/>
    <property type="evidence" value="ECO:0007669"/>
    <property type="project" value="UniProtKB-KW"/>
</dbReference>
<dbReference type="GO" id="GO:0005525">
    <property type="term" value="F:GTP binding"/>
    <property type="evidence" value="ECO:0007669"/>
    <property type="project" value="InterPro"/>
</dbReference>
<dbReference type="Gene3D" id="3.30.62.10">
    <property type="entry name" value="Nef Regulatory Factor"/>
    <property type="match status" value="1"/>
</dbReference>
<dbReference type="InterPro" id="IPR027481">
    <property type="entry name" value="HIV-1_Nef_core_sf"/>
</dbReference>
<dbReference type="InterPro" id="IPR001558">
    <property type="entry name" value="HIV_Nef"/>
</dbReference>
<dbReference type="Pfam" id="PF00469">
    <property type="entry name" value="F-protein"/>
    <property type="match status" value="1"/>
</dbReference>
<dbReference type="SUPFAM" id="SSF55671">
    <property type="entry name" value="Regulatory factor Nef"/>
    <property type="match status" value="1"/>
</dbReference>
<keyword id="KW-0014">AIDS</keyword>
<keyword id="KW-1032">Host cell membrane</keyword>
<keyword id="KW-1043">Host membrane</keyword>
<keyword id="KW-0945">Host-virus interaction</keyword>
<keyword id="KW-0449">Lipoprotein</keyword>
<keyword id="KW-0472">Membrane</keyword>
<keyword id="KW-0519">Myristate</keyword>
<keyword id="KW-0899">Viral immunoevasion</keyword>
<keyword id="KW-0843">Virulence</keyword>
<organismHost>
    <name type="scientific">Homo sapiens</name>
    <name type="common">Human</name>
    <dbReference type="NCBI Taxonomy" id="9606"/>
</organismHost>
<evidence type="ECO:0000250" key="1"/>
<evidence type="ECO:0000256" key="2">
    <source>
        <dbReference type="SAM" id="MobiDB-lite"/>
    </source>
</evidence>
<evidence type="ECO:0000305" key="3"/>
<sequence>MGASGSKKRSKPLQGLQERLLQARGETCGGRCNESGGGYLQSHEGSGREQNSPSCEGQRYQQGDFVNTPWRTPAAEREKELYKQQNMDDVDLDDDDQVGFPVTPRVPLRPMTFKLAVDMSHFIKEKGGLEGLFYSQRRHRILDLYLDKAFTLYPEEFGHNSGLPEKEWKARLKARGIPFS</sequence>
<feature type="initiator methionine" description="Removed; by host" evidence="1">
    <location>
        <position position="1"/>
    </location>
</feature>
<feature type="chain" id="PRO_0000085236" description="Protein Nef">
    <location>
        <begin position="2"/>
        <end position="180"/>
    </location>
</feature>
<feature type="region of interest" description="Disordered" evidence="2">
    <location>
        <begin position="1"/>
        <end position="103"/>
    </location>
</feature>
<feature type="region of interest" description="Acidic">
    <location>
        <begin position="88"/>
        <end position="96"/>
    </location>
</feature>
<feature type="short sequence motif" description="PxxP">
    <location>
        <begin position="104"/>
        <end position="107"/>
    </location>
</feature>
<feature type="compositionally biased region" description="Basic residues" evidence="2">
    <location>
        <begin position="1"/>
        <end position="11"/>
    </location>
</feature>
<feature type="compositionally biased region" description="Polar residues" evidence="2">
    <location>
        <begin position="48"/>
        <end position="65"/>
    </location>
</feature>
<feature type="compositionally biased region" description="Acidic residues" evidence="2">
    <location>
        <begin position="88"/>
        <end position="97"/>
    </location>
</feature>
<feature type="lipid moiety-binding region" description="N-myristoyl glycine; by host" evidence="1">
    <location>
        <position position="2"/>
    </location>
</feature>